<reference key="1">
    <citation type="journal article" date="2003" name="PLoS Biol.">
        <title>The genome sequence of Caenorhabditis briggsae: a platform for comparative genomics.</title>
        <authorList>
            <person name="Stein L.D."/>
            <person name="Bao Z."/>
            <person name="Blasiar D."/>
            <person name="Blumenthal T."/>
            <person name="Brent M.R."/>
            <person name="Chen N."/>
            <person name="Chinwalla A."/>
            <person name="Clarke L."/>
            <person name="Clee C."/>
            <person name="Coghlan A."/>
            <person name="Coulson A."/>
            <person name="D'Eustachio P."/>
            <person name="Fitch D.H.A."/>
            <person name="Fulton L.A."/>
            <person name="Fulton R.E."/>
            <person name="Griffiths-Jones S."/>
            <person name="Harris T.W."/>
            <person name="Hillier L.W."/>
            <person name="Kamath R."/>
            <person name="Kuwabara P.E."/>
            <person name="Mardis E.R."/>
            <person name="Marra M.A."/>
            <person name="Miner T.L."/>
            <person name="Minx P."/>
            <person name="Mullikin J.C."/>
            <person name="Plumb R.W."/>
            <person name="Rogers J."/>
            <person name="Schein J.E."/>
            <person name="Sohrmann M."/>
            <person name="Spieth J."/>
            <person name="Stajich J.E."/>
            <person name="Wei C."/>
            <person name="Willey D."/>
            <person name="Wilson R.K."/>
            <person name="Durbin R.M."/>
            <person name="Waterston R.H."/>
        </authorList>
    </citation>
    <scope>NUCLEOTIDE SEQUENCE [LARGE SCALE GENOMIC DNA]</scope>
    <source>
        <strain>AF16</strain>
    </source>
</reference>
<dbReference type="EC" id="2.3.2.27" evidence="2"/>
<dbReference type="EMBL" id="HE600926">
    <property type="protein sequence ID" value="CAR98714.1"/>
    <property type="molecule type" value="Genomic_DNA"/>
</dbReference>
<dbReference type="RefSeq" id="XP_045098284.1">
    <property type="nucleotide sequence ID" value="XM_045243679.1"/>
</dbReference>
<dbReference type="SMR" id="B6IFN4"/>
<dbReference type="FunCoup" id="B6IFN4">
    <property type="interactions" value="3040"/>
</dbReference>
<dbReference type="STRING" id="6238.B6IFN4"/>
<dbReference type="GeneID" id="68916757"/>
<dbReference type="WormBase" id="CBG25264">
    <property type="protein sequence ID" value="CBP40098"/>
    <property type="gene ID" value="WBGene00086678"/>
</dbReference>
<dbReference type="eggNOG" id="KOG0803">
    <property type="taxonomic scope" value="Eukaryota"/>
</dbReference>
<dbReference type="HOGENOM" id="CLU_004730_0_0_1"/>
<dbReference type="InParanoid" id="B6IFN4"/>
<dbReference type="OMA" id="QWYIKLP"/>
<dbReference type="UniPathway" id="UPA00143"/>
<dbReference type="Proteomes" id="UP000008549">
    <property type="component" value="Unassembled WGS sequence"/>
</dbReference>
<dbReference type="GO" id="GO:0005829">
    <property type="term" value="C:cytosol"/>
    <property type="evidence" value="ECO:0000250"/>
    <property type="project" value="UniProtKB"/>
</dbReference>
<dbReference type="GO" id="GO:1990112">
    <property type="term" value="C:RQC complex"/>
    <property type="evidence" value="ECO:0000318"/>
    <property type="project" value="GO_Central"/>
</dbReference>
<dbReference type="GO" id="GO:0043023">
    <property type="term" value="F:ribosomal large subunit binding"/>
    <property type="evidence" value="ECO:0000318"/>
    <property type="project" value="GO_Central"/>
</dbReference>
<dbReference type="GO" id="GO:0061630">
    <property type="term" value="F:ubiquitin protein ligase activity"/>
    <property type="evidence" value="ECO:0000318"/>
    <property type="project" value="GO_Central"/>
</dbReference>
<dbReference type="GO" id="GO:0008270">
    <property type="term" value="F:zinc ion binding"/>
    <property type="evidence" value="ECO:0007669"/>
    <property type="project" value="UniProtKB-KW"/>
</dbReference>
<dbReference type="GO" id="GO:0016567">
    <property type="term" value="P:protein ubiquitination"/>
    <property type="evidence" value="ECO:0007669"/>
    <property type="project" value="UniProtKB-UniPathway"/>
</dbReference>
<dbReference type="GO" id="GO:0072344">
    <property type="term" value="P:rescue of stalled ribosome"/>
    <property type="evidence" value="ECO:0000318"/>
    <property type="project" value="GO_Central"/>
</dbReference>
<dbReference type="GO" id="GO:1990116">
    <property type="term" value="P:ribosome-associated ubiquitin-dependent protein catabolic process"/>
    <property type="evidence" value="ECO:0000318"/>
    <property type="project" value="GO_Central"/>
</dbReference>
<dbReference type="CDD" id="cd16491">
    <property type="entry name" value="RING-CH-C4HC3_LTN1"/>
    <property type="match status" value="1"/>
</dbReference>
<dbReference type="FunFam" id="1.25.10.10:FF:001435">
    <property type="entry name" value="E3 ubiquitin-protein ligase listerin"/>
    <property type="match status" value="1"/>
</dbReference>
<dbReference type="FunFam" id="3.30.40.10:FF:000038">
    <property type="entry name" value="E3 ubiquitin-protein ligase listerin"/>
    <property type="match status" value="1"/>
</dbReference>
<dbReference type="Gene3D" id="1.25.10.10">
    <property type="entry name" value="Leucine-rich Repeat Variant"/>
    <property type="match status" value="1"/>
</dbReference>
<dbReference type="Gene3D" id="3.30.40.10">
    <property type="entry name" value="Zinc/RING finger domain, C3HC4 (zinc finger)"/>
    <property type="match status" value="1"/>
</dbReference>
<dbReference type="InterPro" id="IPR011989">
    <property type="entry name" value="ARM-like"/>
</dbReference>
<dbReference type="InterPro" id="IPR039795">
    <property type="entry name" value="LTN1/Rkr1"/>
</dbReference>
<dbReference type="InterPro" id="IPR056241">
    <property type="entry name" value="LTN1_HEAT_5th"/>
</dbReference>
<dbReference type="InterPro" id="IPR054478">
    <property type="entry name" value="LTN1_UBC"/>
</dbReference>
<dbReference type="InterPro" id="IPR039804">
    <property type="entry name" value="RING-CH-C4HC3_LTN1"/>
</dbReference>
<dbReference type="InterPro" id="IPR001841">
    <property type="entry name" value="Znf_RING"/>
</dbReference>
<dbReference type="InterPro" id="IPR013083">
    <property type="entry name" value="Znf_RING/FYVE/PHD"/>
</dbReference>
<dbReference type="PANTHER" id="PTHR12389:SF0">
    <property type="entry name" value="E3 UBIQUITIN-PROTEIN LIGASE LISTERIN"/>
    <property type="match status" value="1"/>
</dbReference>
<dbReference type="PANTHER" id="PTHR12389">
    <property type="entry name" value="ZINC FINGER PROTEIN 294"/>
    <property type="match status" value="1"/>
</dbReference>
<dbReference type="Pfam" id="PF24618">
    <property type="entry name" value="LTN1_E3_ligase_5th"/>
    <property type="match status" value="1"/>
</dbReference>
<dbReference type="Pfam" id="PF23009">
    <property type="entry name" value="UBC_like"/>
    <property type="match status" value="1"/>
</dbReference>
<dbReference type="SMART" id="SM00184">
    <property type="entry name" value="RING"/>
    <property type="match status" value="1"/>
</dbReference>
<dbReference type="SUPFAM" id="SSF57850">
    <property type="entry name" value="RING/U-box"/>
    <property type="match status" value="1"/>
</dbReference>
<dbReference type="PROSITE" id="PS50089">
    <property type="entry name" value="ZF_RING_2"/>
    <property type="match status" value="1"/>
</dbReference>
<keyword id="KW-0963">Cytoplasm</keyword>
<keyword id="KW-0479">Metal-binding</keyword>
<keyword id="KW-1185">Reference proteome</keyword>
<keyword id="KW-0677">Repeat</keyword>
<keyword id="KW-0808">Transferase</keyword>
<keyword id="KW-0833">Ubl conjugation pathway</keyword>
<keyword id="KW-0862">Zinc</keyword>
<keyword id="KW-0863">Zinc-finger</keyword>
<gene>
    <name type="ORF">CBG25264</name>
</gene>
<comment type="function">
    <text evidence="1 2">E3 ubiquitin-protein ligase. Component of the ribosome quality control complex (RQC), a ribosome-associated complex that mediates ubiquitination and extraction of incompletely synthesized nascent chains for proteasomal degradation. Ubiquitination leads to vcp/p97 recruitment for extraction and degradation of the incomplete translation product.</text>
</comment>
<comment type="catalytic activity">
    <reaction evidence="2">
        <text>S-ubiquitinyl-[E2 ubiquitin-conjugating enzyme]-L-cysteine + [acceptor protein]-L-lysine = [E2 ubiquitin-conjugating enzyme]-L-cysteine + N(6)-ubiquitinyl-[acceptor protein]-L-lysine.</text>
        <dbReference type="EC" id="2.3.2.27"/>
    </reaction>
</comment>
<comment type="pathway">
    <text>Protein modification; protein ubiquitination.</text>
</comment>
<comment type="subunit">
    <text evidence="1 2">Component of the ribosome quality control complex (RQC), composed of at least the E3 ubiquitin ligase ltn1 and nemf. The complex probably also contains tcf25 as well as vcp/p97 and its ubiquitin-binding cofactors. RQC forms a stable complex with 60S ribosomal subunits.</text>
</comment>
<comment type="subcellular location">
    <subcellularLocation>
        <location evidence="1">Cytoplasm</location>
        <location evidence="1">Cytosol</location>
    </subcellularLocation>
</comment>
<comment type="similarity">
    <text evidence="5">Belongs to the LTN1 family.</text>
</comment>
<organism>
    <name type="scientific">Caenorhabditis briggsae</name>
    <dbReference type="NCBI Taxonomy" id="6238"/>
    <lineage>
        <taxon>Eukaryota</taxon>
        <taxon>Metazoa</taxon>
        <taxon>Ecdysozoa</taxon>
        <taxon>Nematoda</taxon>
        <taxon>Chromadorea</taxon>
        <taxon>Rhabditida</taxon>
        <taxon>Rhabditina</taxon>
        <taxon>Rhabditomorpha</taxon>
        <taxon>Rhabditoidea</taxon>
        <taxon>Rhabditidae</taxon>
        <taxon>Peloderinae</taxon>
        <taxon>Caenorhabditis</taxon>
    </lineage>
</organism>
<name>LTN1_CAEBR</name>
<protein>
    <recommendedName>
        <fullName>E3 ubiquitin-protein ligase listerin</fullName>
        <ecNumber evidence="2">2.3.2.27</ecNumber>
    </recommendedName>
    <alternativeName>
        <fullName evidence="5">RING-type E3 ubiquitin transferase listerin</fullName>
    </alternativeName>
</protein>
<feature type="chain" id="PRO_0000404570" description="E3 ubiquitin-protein ligase listerin">
    <location>
        <begin position="1"/>
        <end position="1503"/>
    </location>
</feature>
<feature type="repeat" description="HEAT 1" evidence="3">
    <location>
        <begin position="52"/>
        <end position="89"/>
    </location>
</feature>
<feature type="repeat" description="HEAT 2" evidence="3">
    <location>
        <begin position="93"/>
        <end position="129"/>
    </location>
</feature>
<feature type="repeat" description="HEAT 3" evidence="3">
    <location>
        <begin position="133"/>
        <end position="170"/>
    </location>
</feature>
<feature type="repeat" description="HEAT 4" evidence="3">
    <location>
        <begin position="280"/>
        <end position="318"/>
    </location>
</feature>
<feature type="repeat" description="HEAT 5" evidence="3">
    <location>
        <begin position="323"/>
        <end position="345"/>
    </location>
</feature>
<feature type="repeat" description="HEAT 6" evidence="3">
    <location>
        <begin position="346"/>
        <end position="384"/>
    </location>
</feature>
<feature type="repeat" description="HEAT 7" evidence="3">
    <location>
        <begin position="552"/>
        <end position="589"/>
    </location>
</feature>
<feature type="repeat" description="HEAT 8" evidence="3">
    <location>
        <begin position="640"/>
        <end position="663"/>
    </location>
</feature>
<feature type="repeat" description="HEAT 9" evidence="3">
    <location>
        <begin position="664"/>
        <end position="700"/>
    </location>
</feature>
<feature type="repeat" description="HEAT 10" evidence="3">
    <location>
        <begin position="845"/>
        <end position="882"/>
    </location>
</feature>
<feature type="repeat" description="HEAT 11" evidence="3">
    <location>
        <begin position="1022"/>
        <end position="1065"/>
    </location>
</feature>
<feature type="repeat" description="HEAT 12" evidence="3">
    <location>
        <begin position="1078"/>
        <end position="1117"/>
    </location>
</feature>
<feature type="repeat" description="HEAT 13" evidence="3">
    <location>
        <begin position="1141"/>
        <end position="1183"/>
    </location>
</feature>
<feature type="repeat" description="HEAT 14" evidence="3">
    <location>
        <begin position="1302"/>
        <end position="1340"/>
    </location>
</feature>
<feature type="zinc finger region" description="RING-type" evidence="4">
    <location>
        <begin position="1446"/>
        <end position="1499"/>
    </location>
</feature>
<proteinExistence type="inferred from homology"/>
<evidence type="ECO:0000250" key="1">
    <source>
        <dbReference type="UniProtKB" id="O94822"/>
    </source>
</evidence>
<evidence type="ECO:0000250" key="2">
    <source>
        <dbReference type="UniProtKB" id="Q04781"/>
    </source>
</evidence>
<evidence type="ECO:0000255" key="3"/>
<evidence type="ECO:0000255" key="4">
    <source>
        <dbReference type="PROSITE-ProRule" id="PRU00175"/>
    </source>
</evidence>
<evidence type="ECO:0000305" key="5"/>
<sequence length="1503" mass="171887">MSKQQRRKGNAKNASSASAHGYLAQGGENFVGLTPEMNIFEMASSNRLSNFSGIDDETRIVMRKLTKKDCQTREKGLRELTNIIAETSSIENCYEHFCGLVPQLSTDGSPTVRLLTMKTITLFLVKLEKSACKGLKKIIPMVLFARCDVTNGVAAAAGAVIRDGFEADKKQKVIQLFAPLVFEMAAKIVQGKHDLSVPVEYDASEDREARKSRLETQSLNVFLSYIKEFGADSTIWEEEARKLFENIAFLKMVFGGTNAALKVQVLNLAYRFKNNVEVILNTPSIVTYIQNHLDSQTFTPECSTAWEGMIILLPSAQFHTKVSLQNGIYPRFLNVIRKKGNHWRVLQHFLLPAVVLLLKEMGSLENNMKVLGTIMESFTDNLPWPTDASINAVLSWFNAFSDFVRWILTNDRINLVVWEKLHPLIVTVTEQAMTFPTKEIAECVTDLLQWIIELKTINEADVSTLLLNIESKIVGAGTENSRLIKHLLTEPGKNIVLSNLHANLLSSPELVDFQIIKNLSCSENDYFNATSQKISNFSFIEKTENFDITQAGDIVRLIKLLLENQEIKSLNISVKNDHVGRRLLLTGGSTIWNKLLKNVPVSTFQNMINYWHEKRNGTAIADAVSFLKEMGVEMDTKQAAENVEFLITLLRKMKSTDVSNEAEKNVLILKLFTAIFESDEDAKSEHYNCLSEHLTSDFNSGQFFEKLFASSEEYDIERILETACRVDKLIDLCEEQTRQNIVNNVLLSGKQCGTIIEQFQFLELEVMSCSTKPTVISTTHQHCYSHLDEHKAKEIVTESARIALFNISSKCECFFLISHEQFFFSDYNSAHQVFGWQVISIISALEKRYSLVALTEELQRSRREIEERLIRSDEVRFKLDDSSPCIFLADAYDMSFEQKKKYIQCQAEPSKVPEHALEVLYRENQTPLDFLMNVFEGGYQMFDFDRSKNYHWMINLMFVKKCIQYGGSIFVAEESGLRDYALCGIVTVLDIHKRSTLQQSTDILGNTPNAFDEDPRLEALTTLFIELYLVLNDSIKNDNHPTQTIEEWKEFYVPTINSLFIRMFRMIRKEQQPTPFVRTLLKAMFTLVEFPTNVPNDSVVTREFVPELSVFKYSLLEESFIAQAFILLSSNVEHVQLIGYAAAKLLVPIMFKTENPQVLDDDQDETEIMVANRSKLNLPVMISKSYPVDHIHKHVGPLLLSLAILPLETTKEFVLNQEQRVAYCDAIDSFFKNALNALMLDQPFDFSQVPIVCKIRKQMYFFQFRYSSHFFTAKSQEREYYLQSDLTASPLFFEKFASRLLFKSITLLPAAVRLFHKNIPNNFKPIFQEVVTKHASKLLIENELNKVQNAEFGEVLKVRTVPVTGQIISEYTVEDTKMKLTIELPRDYPLSVPAMNLDKAIVKGDRAKKWLLQLNAYLFHQNGAILEGIEMWKRNVDKGIEGAEDCTICMMTVHQQTNQLPKVKCKQCKNRFHSNCLVSSFHTYKWFESSNQSTCPLCRNNFT</sequence>
<accession>B6IFN4</accession>